<comment type="function">
    <text evidence="1">Catalyzes the formation of sulfite from phosphoadenosine 5'-phosphosulfate (PAPS) using thioredoxin as an electron donor.</text>
</comment>
<comment type="catalytic activity">
    <reaction evidence="1">
        <text>[thioredoxin]-disulfide + sulfite + adenosine 3',5'-bisphosphate + 2 H(+) = [thioredoxin]-dithiol + 3'-phosphoadenylyl sulfate</text>
        <dbReference type="Rhea" id="RHEA:11724"/>
        <dbReference type="Rhea" id="RHEA-COMP:10698"/>
        <dbReference type="Rhea" id="RHEA-COMP:10700"/>
        <dbReference type="ChEBI" id="CHEBI:15378"/>
        <dbReference type="ChEBI" id="CHEBI:17359"/>
        <dbReference type="ChEBI" id="CHEBI:29950"/>
        <dbReference type="ChEBI" id="CHEBI:50058"/>
        <dbReference type="ChEBI" id="CHEBI:58339"/>
        <dbReference type="ChEBI" id="CHEBI:58343"/>
        <dbReference type="EC" id="1.8.4.8"/>
    </reaction>
</comment>
<comment type="pathway">
    <text evidence="1">Sulfur metabolism; hydrogen sulfide biosynthesis; sulfite from sulfate: step 3/3.</text>
</comment>
<comment type="subcellular location">
    <subcellularLocation>
        <location evidence="1">Cytoplasm</location>
    </subcellularLocation>
</comment>
<comment type="similarity">
    <text evidence="1">Belongs to the PAPS reductase family. CysH subfamily.</text>
</comment>
<accession>B5BEZ7</accession>
<gene>
    <name evidence="1" type="primary">cysH</name>
    <name type="ordered locus">SSPA2611</name>
</gene>
<dbReference type="EC" id="1.8.4.8" evidence="1"/>
<dbReference type="EMBL" id="FM200053">
    <property type="protein sequence ID" value="CAR60852.1"/>
    <property type="molecule type" value="Genomic_DNA"/>
</dbReference>
<dbReference type="RefSeq" id="WP_000080389.1">
    <property type="nucleotide sequence ID" value="NC_011147.1"/>
</dbReference>
<dbReference type="SMR" id="B5BEZ7"/>
<dbReference type="KEGG" id="sek:SSPA2611"/>
<dbReference type="HOGENOM" id="CLU_044089_3_0_6"/>
<dbReference type="UniPathway" id="UPA00140">
    <property type="reaction ID" value="UER00206"/>
</dbReference>
<dbReference type="Proteomes" id="UP000001869">
    <property type="component" value="Chromosome"/>
</dbReference>
<dbReference type="GO" id="GO:0005737">
    <property type="term" value="C:cytoplasm"/>
    <property type="evidence" value="ECO:0007669"/>
    <property type="project" value="UniProtKB-SubCell"/>
</dbReference>
<dbReference type="GO" id="GO:0004604">
    <property type="term" value="F:phosphoadenylyl-sulfate reductase (thioredoxin) activity"/>
    <property type="evidence" value="ECO:0007669"/>
    <property type="project" value="UniProtKB-UniRule"/>
</dbReference>
<dbReference type="GO" id="GO:0070814">
    <property type="term" value="P:hydrogen sulfide biosynthetic process"/>
    <property type="evidence" value="ECO:0007669"/>
    <property type="project" value="UniProtKB-UniRule"/>
</dbReference>
<dbReference type="GO" id="GO:0019379">
    <property type="term" value="P:sulfate assimilation, phosphoadenylyl sulfate reduction by phosphoadenylyl-sulfate reductase (thioredoxin)"/>
    <property type="evidence" value="ECO:0007669"/>
    <property type="project" value="UniProtKB-UniRule"/>
</dbReference>
<dbReference type="CDD" id="cd23945">
    <property type="entry name" value="PAPS_reductase"/>
    <property type="match status" value="1"/>
</dbReference>
<dbReference type="FunFam" id="3.40.50.620:FF:000043">
    <property type="entry name" value="Phosphoadenosine phosphosulfate reductase"/>
    <property type="match status" value="1"/>
</dbReference>
<dbReference type="Gene3D" id="3.40.50.620">
    <property type="entry name" value="HUPs"/>
    <property type="match status" value="1"/>
</dbReference>
<dbReference type="HAMAP" id="MF_00063">
    <property type="entry name" value="CysH"/>
    <property type="match status" value="1"/>
</dbReference>
<dbReference type="InterPro" id="IPR004511">
    <property type="entry name" value="PAPS/APS_Rdtase"/>
</dbReference>
<dbReference type="InterPro" id="IPR002500">
    <property type="entry name" value="PAPS_reduct_dom"/>
</dbReference>
<dbReference type="InterPro" id="IPR011800">
    <property type="entry name" value="PAPS_reductase_CysH"/>
</dbReference>
<dbReference type="InterPro" id="IPR014729">
    <property type="entry name" value="Rossmann-like_a/b/a_fold"/>
</dbReference>
<dbReference type="NCBIfam" id="TIGR00434">
    <property type="entry name" value="cysH"/>
    <property type="match status" value="1"/>
</dbReference>
<dbReference type="NCBIfam" id="TIGR02057">
    <property type="entry name" value="PAPS_reductase"/>
    <property type="match status" value="1"/>
</dbReference>
<dbReference type="NCBIfam" id="NF002537">
    <property type="entry name" value="PRK02090.1"/>
    <property type="match status" value="1"/>
</dbReference>
<dbReference type="PANTHER" id="PTHR46509">
    <property type="entry name" value="PHOSPHOADENOSINE PHOSPHOSULFATE REDUCTASE"/>
    <property type="match status" value="1"/>
</dbReference>
<dbReference type="PANTHER" id="PTHR46509:SF1">
    <property type="entry name" value="PHOSPHOADENOSINE PHOSPHOSULFATE REDUCTASE"/>
    <property type="match status" value="1"/>
</dbReference>
<dbReference type="Pfam" id="PF01507">
    <property type="entry name" value="PAPS_reduct"/>
    <property type="match status" value="1"/>
</dbReference>
<dbReference type="PIRSF" id="PIRSF000857">
    <property type="entry name" value="PAPS_reductase"/>
    <property type="match status" value="1"/>
</dbReference>
<dbReference type="SUPFAM" id="SSF52402">
    <property type="entry name" value="Adenine nucleotide alpha hydrolases-like"/>
    <property type="match status" value="1"/>
</dbReference>
<organism>
    <name type="scientific">Salmonella paratyphi A (strain AKU_12601)</name>
    <dbReference type="NCBI Taxonomy" id="554290"/>
    <lineage>
        <taxon>Bacteria</taxon>
        <taxon>Pseudomonadati</taxon>
        <taxon>Pseudomonadota</taxon>
        <taxon>Gammaproteobacteria</taxon>
        <taxon>Enterobacterales</taxon>
        <taxon>Enterobacteriaceae</taxon>
        <taxon>Salmonella</taxon>
    </lineage>
</organism>
<proteinExistence type="inferred from homology"/>
<keyword id="KW-0963">Cytoplasm</keyword>
<keyword id="KW-0560">Oxidoreductase</keyword>
<name>CYSH_SALPK</name>
<evidence type="ECO:0000255" key="1">
    <source>
        <dbReference type="HAMAP-Rule" id="MF_00063"/>
    </source>
</evidence>
<protein>
    <recommendedName>
        <fullName evidence="1">Phosphoadenosine 5'-phosphosulfate reductase</fullName>
        <shortName evidence="1">PAPS reductase</shortName>
        <ecNumber evidence="1">1.8.4.8</ecNumber>
    </recommendedName>
    <alternativeName>
        <fullName evidence="1">3'-phosphoadenylylsulfate reductase</fullName>
    </alternativeName>
    <alternativeName>
        <fullName evidence="1">PAPS reductase, thioredoxin dependent</fullName>
    </alternativeName>
    <alternativeName>
        <fullName evidence="1">PAPS sulfotransferase</fullName>
    </alternativeName>
    <alternativeName>
        <fullName evidence="1">PAdoPS reductase</fullName>
    </alternativeName>
</protein>
<sequence length="244" mass="27952">MSQLDLNALNELPKVDRVLALAETNAQLETLTAEERVAWALENLPGEYVLSSSFGIQAAVSLHLVNQIRPDIPVILTDTGYLFPEAYQFIDELTDKLKLNLKVYRAGESPAWQEARYGKLWEQGVEGIEKYNEINKVEPMNRALKELNAQTWFAGLRREQSGSRAHLPVLAIQRGVFKVLPIIDWDNRTVYQYLQKHGLKYHPLWDQGYLSVGDTHTTRKWEPGMAEEETRFFGLKRECGLHEG</sequence>
<feature type="chain" id="PRO_1000092185" description="Phosphoadenosine 5'-phosphosulfate reductase">
    <location>
        <begin position="1"/>
        <end position="244"/>
    </location>
</feature>
<feature type="active site" description="Nucleophile; cysteine thiosulfonate intermediate" evidence="1">
    <location>
        <position position="239"/>
    </location>
</feature>
<reference key="1">
    <citation type="journal article" date="2009" name="BMC Genomics">
        <title>Pseudogene accumulation in the evolutionary histories of Salmonella enterica serovars Paratyphi A and Typhi.</title>
        <authorList>
            <person name="Holt K.E."/>
            <person name="Thomson N.R."/>
            <person name="Wain J."/>
            <person name="Langridge G.C."/>
            <person name="Hasan R."/>
            <person name="Bhutta Z.A."/>
            <person name="Quail M.A."/>
            <person name="Norbertczak H."/>
            <person name="Walker D."/>
            <person name="Simmonds M."/>
            <person name="White B."/>
            <person name="Bason N."/>
            <person name="Mungall K."/>
            <person name="Dougan G."/>
            <person name="Parkhill J."/>
        </authorList>
    </citation>
    <scope>NUCLEOTIDE SEQUENCE [LARGE SCALE GENOMIC DNA]</scope>
    <source>
        <strain>AKU_12601</strain>
    </source>
</reference>